<evidence type="ECO:0000255" key="1">
    <source>
        <dbReference type="HAMAP-Rule" id="MF_00113"/>
    </source>
</evidence>
<keyword id="KW-0963">Cytoplasm</keyword>
<keyword id="KW-0671">Queuosine biosynthesis</keyword>
<keyword id="KW-1185">Reference proteome</keyword>
<keyword id="KW-0949">S-adenosyl-L-methionine</keyword>
<keyword id="KW-0808">Transferase</keyword>
<dbReference type="EC" id="2.4.99.17" evidence="1"/>
<dbReference type="EMBL" id="AP009247">
    <property type="protein sequence ID" value="BAF61281.1"/>
    <property type="molecule type" value="Genomic_DNA"/>
</dbReference>
<dbReference type="RefSeq" id="WP_011929551.1">
    <property type="nucleotide sequence ID" value="NC_009465.1"/>
</dbReference>
<dbReference type="SMR" id="A5CXQ6"/>
<dbReference type="STRING" id="412965.COSY_0147"/>
<dbReference type="KEGG" id="vok:COSY_0147"/>
<dbReference type="eggNOG" id="COG0809">
    <property type="taxonomic scope" value="Bacteria"/>
</dbReference>
<dbReference type="HOGENOM" id="CLU_039110_1_0_6"/>
<dbReference type="OrthoDB" id="9805933at2"/>
<dbReference type="UniPathway" id="UPA00392"/>
<dbReference type="Proteomes" id="UP000000247">
    <property type="component" value="Chromosome"/>
</dbReference>
<dbReference type="GO" id="GO:0005737">
    <property type="term" value="C:cytoplasm"/>
    <property type="evidence" value="ECO:0007669"/>
    <property type="project" value="UniProtKB-SubCell"/>
</dbReference>
<dbReference type="GO" id="GO:0051075">
    <property type="term" value="F:S-adenosylmethionine:tRNA ribosyltransferase-isomerase activity"/>
    <property type="evidence" value="ECO:0007669"/>
    <property type="project" value="UniProtKB-EC"/>
</dbReference>
<dbReference type="GO" id="GO:0008616">
    <property type="term" value="P:queuosine biosynthetic process"/>
    <property type="evidence" value="ECO:0007669"/>
    <property type="project" value="UniProtKB-UniRule"/>
</dbReference>
<dbReference type="GO" id="GO:0002099">
    <property type="term" value="P:tRNA wobble guanine modification"/>
    <property type="evidence" value="ECO:0007669"/>
    <property type="project" value="TreeGrafter"/>
</dbReference>
<dbReference type="FunFam" id="3.40.1780.10:FF:000001">
    <property type="entry name" value="S-adenosylmethionine:tRNA ribosyltransferase-isomerase"/>
    <property type="match status" value="1"/>
</dbReference>
<dbReference type="Gene3D" id="2.40.10.240">
    <property type="entry name" value="QueA-like"/>
    <property type="match status" value="1"/>
</dbReference>
<dbReference type="Gene3D" id="3.40.1780.10">
    <property type="entry name" value="QueA-like"/>
    <property type="match status" value="1"/>
</dbReference>
<dbReference type="HAMAP" id="MF_00113">
    <property type="entry name" value="QueA"/>
    <property type="match status" value="1"/>
</dbReference>
<dbReference type="InterPro" id="IPR003699">
    <property type="entry name" value="QueA"/>
</dbReference>
<dbReference type="InterPro" id="IPR042118">
    <property type="entry name" value="QueA_dom1"/>
</dbReference>
<dbReference type="InterPro" id="IPR042119">
    <property type="entry name" value="QueA_dom2"/>
</dbReference>
<dbReference type="InterPro" id="IPR036100">
    <property type="entry name" value="QueA_sf"/>
</dbReference>
<dbReference type="NCBIfam" id="NF001140">
    <property type="entry name" value="PRK00147.1"/>
    <property type="match status" value="1"/>
</dbReference>
<dbReference type="NCBIfam" id="TIGR00113">
    <property type="entry name" value="queA"/>
    <property type="match status" value="1"/>
</dbReference>
<dbReference type="PANTHER" id="PTHR30307">
    <property type="entry name" value="S-ADENOSYLMETHIONINE:TRNA RIBOSYLTRANSFERASE-ISOMERASE"/>
    <property type="match status" value="1"/>
</dbReference>
<dbReference type="PANTHER" id="PTHR30307:SF0">
    <property type="entry name" value="S-ADENOSYLMETHIONINE:TRNA RIBOSYLTRANSFERASE-ISOMERASE"/>
    <property type="match status" value="1"/>
</dbReference>
<dbReference type="Pfam" id="PF02547">
    <property type="entry name" value="Queuosine_synth"/>
    <property type="match status" value="1"/>
</dbReference>
<dbReference type="SUPFAM" id="SSF111337">
    <property type="entry name" value="QueA-like"/>
    <property type="match status" value="1"/>
</dbReference>
<reference key="1">
    <citation type="journal article" date="2007" name="Curr. Biol.">
        <title>Reduced genome of the thioautotrophic intracellular symbiont in a deep-sea clam, Calyptogena okutanii.</title>
        <authorList>
            <person name="Kuwahara H."/>
            <person name="Yoshida T."/>
            <person name="Takaki Y."/>
            <person name="Shimamura S."/>
            <person name="Nishi S."/>
            <person name="Harada M."/>
            <person name="Matsuyama K."/>
            <person name="Takishita K."/>
            <person name="Kawato M."/>
            <person name="Uematsu K."/>
            <person name="Fujiwara Y."/>
            <person name="Sato T."/>
            <person name="Kato C."/>
            <person name="Kitagawa M."/>
            <person name="Kato I."/>
            <person name="Maruyama T."/>
        </authorList>
    </citation>
    <scope>NUCLEOTIDE SEQUENCE [LARGE SCALE GENOMIC DNA]</scope>
    <source>
        <strain>HA</strain>
    </source>
</reference>
<sequence>MQLKDFDFDLPASLIAQHPIKNRTDSRLLIKRSSIIDIQFNQIGDFFQSGDLLIMNNTKVIPARLFGTKETGGKVEIMIERILDENQVLAMIKASRAPKIGSCIFLENDVNIIVYQKDNGFYTLIFETDSLFDLLNNIGHTPLPPYIKRTNNVQDLSRYQTVYAQKDGAVAAPTAGLHFDDSLLAQLKIQGIDHLFVTLHIGSGTFTPIRTDNIKNHVMHSEIFEISQVTVDRINLTKANGGRIIAVGTTTVRVLESSLKNGKLIAQNGETDIFIYPSYQFRIVDSLITNFHLPKSSLLMLVSAFIGRDKMLELYKHAIEQKYKFLSYGDAMFLEKNNDL</sequence>
<feature type="chain" id="PRO_1000015305" description="S-adenosylmethionine:tRNA ribosyltransferase-isomerase">
    <location>
        <begin position="1"/>
        <end position="340"/>
    </location>
</feature>
<accession>A5CXQ6</accession>
<name>QUEA_VESOH</name>
<organism>
    <name type="scientific">Vesicomyosocius okutanii subsp. Calyptogena okutanii (strain HA)</name>
    <dbReference type="NCBI Taxonomy" id="412965"/>
    <lineage>
        <taxon>Bacteria</taxon>
        <taxon>Pseudomonadati</taxon>
        <taxon>Pseudomonadota</taxon>
        <taxon>Gammaproteobacteria</taxon>
        <taxon>Candidatus Pseudothioglobaceae</taxon>
        <taxon>Candidatus Vesicomyosocius</taxon>
    </lineage>
</organism>
<proteinExistence type="inferred from homology"/>
<comment type="function">
    <text evidence="1">Transfers and isomerizes the ribose moiety from AdoMet to the 7-aminomethyl group of 7-deazaguanine (preQ1-tRNA) to give epoxyqueuosine (oQ-tRNA).</text>
</comment>
<comment type="catalytic activity">
    <reaction evidence="1">
        <text>7-aminomethyl-7-carbaguanosine(34) in tRNA + S-adenosyl-L-methionine = epoxyqueuosine(34) in tRNA + adenine + L-methionine + 2 H(+)</text>
        <dbReference type="Rhea" id="RHEA:32155"/>
        <dbReference type="Rhea" id="RHEA-COMP:10342"/>
        <dbReference type="Rhea" id="RHEA-COMP:18582"/>
        <dbReference type="ChEBI" id="CHEBI:15378"/>
        <dbReference type="ChEBI" id="CHEBI:16708"/>
        <dbReference type="ChEBI" id="CHEBI:57844"/>
        <dbReference type="ChEBI" id="CHEBI:59789"/>
        <dbReference type="ChEBI" id="CHEBI:82833"/>
        <dbReference type="ChEBI" id="CHEBI:194443"/>
        <dbReference type="EC" id="2.4.99.17"/>
    </reaction>
</comment>
<comment type="pathway">
    <text evidence="1">tRNA modification; tRNA-queuosine biosynthesis.</text>
</comment>
<comment type="subunit">
    <text evidence="1">Monomer.</text>
</comment>
<comment type="subcellular location">
    <subcellularLocation>
        <location evidence="1">Cytoplasm</location>
    </subcellularLocation>
</comment>
<comment type="similarity">
    <text evidence="1">Belongs to the QueA family.</text>
</comment>
<gene>
    <name evidence="1" type="primary">queA</name>
    <name type="ordered locus">COSY_0147</name>
</gene>
<protein>
    <recommendedName>
        <fullName evidence="1">S-adenosylmethionine:tRNA ribosyltransferase-isomerase</fullName>
        <ecNumber evidence="1">2.4.99.17</ecNumber>
    </recommendedName>
    <alternativeName>
        <fullName evidence="1">Queuosine biosynthesis protein QueA</fullName>
    </alternativeName>
</protein>